<protein>
    <recommendedName>
        <fullName evidence="1">2-oxoglutarate dehydrogenase E1 component</fullName>
        <ecNumber evidence="1">1.2.4.2</ecNumber>
    </recommendedName>
    <alternativeName>
        <fullName evidence="1">Alpha-ketoglutarate dehydrogenase</fullName>
    </alternativeName>
</protein>
<keyword id="KW-0324">Glycolysis</keyword>
<keyword id="KW-0560">Oxidoreductase</keyword>
<keyword id="KW-0786">Thiamine pyrophosphate</keyword>
<evidence type="ECO:0000255" key="1">
    <source>
        <dbReference type="HAMAP-Rule" id="MF_01169"/>
    </source>
</evidence>
<dbReference type="EC" id="1.2.4.2" evidence="1"/>
<dbReference type="EMBL" id="CP000703">
    <property type="protein sequence ID" value="ABQ49268.1"/>
    <property type="molecule type" value="Genomic_DNA"/>
</dbReference>
<dbReference type="RefSeq" id="WP_000180673.1">
    <property type="nucleotide sequence ID" value="NC_009487.1"/>
</dbReference>
<dbReference type="SMR" id="A5ISU5"/>
<dbReference type="KEGG" id="saj:SaurJH9_1474"/>
<dbReference type="HOGENOM" id="CLU_004709_1_0_9"/>
<dbReference type="GO" id="GO:0005829">
    <property type="term" value="C:cytosol"/>
    <property type="evidence" value="ECO:0007669"/>
    <property type="project" value="TreeGrafter"/>
</dbReference>
<dbReference type="GO" id="GO:0045252">
    <property type="term" value="C:oxoglutarate dehydrogenase complex"/>
    <property type="evidence" value="ECO:0007669"/>
    <property type="project" value="TreeGrafter"/>
</dbReference>
<dbReference type="GO" id="GO:0004591">
    <property type="term" value="F:oxoglutarate dehydrogenase (succinyl-transferring) activity"/>
    <property type="evidence" value="ECO:0007669"/>
    <property type="project" value="UniProtKB-UniRule"/>
</dbReference>
<dbReference type="GO" id="GO:0030976">
    <property type="term" value="F:thiamine pyrophosphate binding"/>
    <property type="evidence" value="ECO:0007669"/>
    <property type="project" value="UniProtKB-UniRule"/>
</dbReference>
<dbReference type="GO" id="GO:0006096">
    <property type="term" value="P:glycolytic process"/>
    <property type="evidence" value="ECO:0007669"/>
    <property type="project" value="UniProtKB-UniRule"/>
</dbReference>
<dbReference type="GO" id="GO:0006099">
    <property type="term" value="P:tricarboxylic acid cycle"/>
    <property type="evidence" value="ECO:0007669"/>
    <property type="project" value="TreeGrafter"/>
</dbReference>
<dbReference type="CDD" id="cd02016">
    <property type="entry name" value="TPP_E1_OGDC_like"/>
    <property type="match status" value="1"/>
</dbReference>
<dbReference type="FunFam" id="3.40.50.11610:FF:000002">
    <property type="entry name" value="2-oxoglutarate dehydrogenase E1 component"/>
    <property type="match status" value="1"/>
</dbReference>
<dbReference type="FunFam" id="3.40.50.970:FF:000036">
    <property type="entry name" value="2-oxoglutarate dehydrogenase E1 component"/>
    <property type="match status" value="1"/>
</dbReference>
<dbReference type="Gene3D" id="3.40.50.12470">
    <property type="match status" value="1"/>
</dbReference>
<dbReference type="Gene3D" id="3.40.50.970">
    <property type="match status" value="1"/>
</dbReference>
<dbReference type="Gene3D" id="3.40.50.11610">
    <property type="entry name" value="Multifunctional 2-oxoglutarate metabolism enzyme, C-terminal domain"/>
    <property type="match status" value="1"/>
</dbReference>
<dbReference type="Gene3D" id="1.10.287.1150">
    <property type="entry name" value="TPP helical domain"/>
    <property type="match status" value="1"/>
</dbReference>
<dbReference type="HAMAP" id="MF_01169">
    <property type="entry name" value="SucA_OdhA"/>
    <property type="match status" value="1"/>
</dbReference>
<dbReference type="InterPro" id="IPR011603">
    <property type="entry name" value="2oxoglutarate_DH_E1"/>
</dbReference>
<dbReference type="InterPro" id="IPR023784">
    <property type="entry name" value="2oxoglutarate_DH_E1_bac"/>
</dbReference>
<dbReference type="InterPro" id="IPR001017">
    <property type="entry name" value="DH_E1"/>
</dbReference>
<dbReference type="InterPro" id="IPR042179">
    <property type="entry name" value="KGD_C_sf"/>
</dbReference>
<dbReference type="InterPro" id="IPR031717">
    <property type="entry name" value="ODO-1/KGD_C"/>
</dbReference>
<dbReference type="InterPro" id="IPR029061">
    <property type="entry name" value="THDP-binding"/>
</dbReference>
<dbReference type="InterPro" id="IPR005475">
    <property type="entry name" value="Transketolase-like_Pyr-bd"/>
</dbReference>
<dbReference type="NCBIfam" id="TIGR00239">
    <property type="entry name" value="2oxo_dh_E1"/>
    <property type="match status" value="1"/>
</dbReference>
<dbReference type="NCBIfam" id="NF006914">
    <property type="entry name" value="PRK09404.1"/>
    <property type="match status" value="1"/>
</dbReference>
<dbReference type="NCBIfam" id="NF008907">
    <property type="entry name" value="PRK12270.1"/>
    <property type="match status" value="1"/>
</dbReference>
<dbReference type="PANTHER" id="PTHR23152:SF4">
    <property type="entry name" value="2-OXOADIPATE DEHYDROGENASE COMPLEX COMPONENT E1"/>
    <property type="match status" value="1"/>
</dbReference>
<dbReference type="PANTHER" id="PTHR23152">
    <property type="entry name" value="2-OXOGLUTARATE DEHYDROGENASE"/>
    <property type="match status" value="1"/>
</dbReference>
<dbReference type="Pfam" id="PF00676">
    <property type="entry name" value="E1_dh"/>
    <property type="match status" value="1"/>
</dbReference>
<dbReference type="Pfam" id="PF16870">
    <property type="entry name" value="OxoGdeHyase_C"/>
    <property type="match status" value="1"/>
</dbReference>
<dbReference type="Pfam" id="PF02779">
    <property type="entry name" value="Transket_pyr"/>
    <property type="match status" value="1"/>
</dbReference>
<dbReference type="PIRSF" id="PIRSF000157">
    <property type="entry name" value="Oxoglu_dh_E1"/>
    <property type="match status" value="1"/>
</dbReference>
<dbReference type="SMART" id="SM00861">
    <property type="entry name" value="Transket_pyr"/>
    <property type="match status" value="1"/>
</dbReference>
<dbReference type="SUPFAM" id="SSF52518">
    <property type="entry name" value="Thiamin diphosphate-binding fold (THDP-binding)"/>
    <property type="match status" value="2"/>
</dbReference>
<proteinExistence type="inferred from homology"/>
<organism>
    <name type="scientific">Staphylococcus aureus (strain JH9)</name>
    <dbReference type="NCBI Taxonomy" id="359786"/>
    <lineage>
        <taxon>Bacteria</taxon>
        <taxon>Bacillati</taxon>
        <taxon>Bacillota</taxon>
        <taxon>Bacilli</taxon>
        <taxon>Bacillales</taxon>
        <taxon>Staphylococcaceae</taxon>
        <taxon>Staphylococcus</taxon>
    </lineage>
</organism>
<accession>A5ISU5</accession>
<reference key="1">
    <citation type="submission" date="2007-05" db="EMBL/GenBank/DDBJ databases">
        <title>Complete sequence of chromosome of Staphylococcus aureus subsp. aureus JH9.</title>
        <authorList>
            <consortium name="US DOE Joint Genome Institute"/>
            <person name="Copeland A."/>
            <person name="Lucas S."/>
            <person name="Lapidus A."/>
            <person name="Barry K."/>
            <person name="Detter J.C."/>
            <person name="Glavina del Rio T."/>
            <person name="Hammon N."/>
            <person name="Israni S."/>
            <person name="Pitluck S."/>
            <person name="Chain P."/>
            <person name="Malfatti S."/>
            <person name="Shin M."/>
            <person name="Vergez L."/>
            <person name="Schmutz J."/>
            <person name="Larimer F."/>
            <person name="Land M."/>
            <person name="Hauser L."/>
            <person name="Kyrpides N."/>
            <person name="Kim E."/>
            <person name="Tomasz A."/>
            <person name="Richardson P."/>
        </authorList>
    </citation>
    <scope>NUCLEOTIDE SEQUENCE [LARGE SCALE GENOMIC DNA]</scope>
    <source>
        <strain>JH9</strain>
    </source>
</reference>
<gene>
    <name evidence="1" type="primary">odhA</name>
    <name type="ordered locus">SaurJH9_1474</name>
</gene>
<sequence>MTNERKEVSEAPVNFGANLGLMLDLYDDFLQDPSSVPEDLQVLFSTIKNDDSIVPALKSTSSQNSDGTIKRVMRLIDNIRQYGHLKADIYPVNPPKRKHVPKLEIEDFDLDQQTLEGISAGIVSDHFADIYDNAYEAILRMEKRYKGPIAFEYTHINNNTERGWLKRRIETPYKVTLNNNEKRALFKQLAYVEGFEKYLHKNFVGAKRFSIEGVDALVPMLQRTITIAAKEGIKNIQIGMAHRGRLNVLTHVLEKPYEMMISEFMHTDPMKFLPEDGSLQLTAGWTGDVKYHLGGIKTTDSYGTMQRIALANNPSHLEIVAPVVEGRTRAAQDDTQRAGAPTTDHHKAMPIIIHGDAAYPGQGINFETMNLGNLKGYSTGGSLHIITNNRIGFTTEPIDARSTTYSTDVAKGYDVPIFHVNADDVEATIEAIDIAMEFRKEFHKDVVIDLVGYRRFGHNEMDEPSITNPVPYQNIRKHDSVEYVFGKKLVNEGVISEDEMHSFIEQVQKELRQAHDKINKADKMDNPDMEKPAELALPLQADEQSFTFDHLKEINDALLTYPDGFNILKKLNKVLEKRHEPFNKEDGLVDWAQAEQLAFATILQDGTPIRLTGQDSERGTFSHRHAVLHDEQTGETYTPLHHVPDQKATFDIHNSPLSEAAVVGFEYGYNVENKKSFNIWEAQYGDFANMSQMIFDNFLFSSRSKWGERSGLTLFLPHAYEGQGPEHSSARLERFLQLAAENNCTVVNLSSSSNYFHLLRAQAASLDSEQMRPLVVMSPKSLLRNKTVAKPIDEFTSGGFEPILTESYQADKVTKVILATGKMFIDLKEALAKNPDESVLLVAIERLYPFPEEEIEALLAQLPNLEEVSWVQEEPKNQGAWLYVYPYVKVLVADKYDLSYHGRIQRAAPAEGDGEIHKLVQNKIIENALKNN</sequence>
<feature type="chain" id="PRO_1000085388" description="2-oxoglutarate dehydrogenase E1 component">
    <location>
        <begin position="1"/>
        <end position="932"/>
    </location>
</feature>
<comment type="function">
    <text evidence="1">E1 component of the 2-oxoglutarate dehydrogenase (OGDH) complex which catalyzes the decarboxylation of 2-oxoglutarate, the first step in the conversion of 2-oxoglutarate to succinyl-CoA and CO(2).</text>
</comment>
<comment type="catalytic activity">
    <reaction evidence="1">
        <text>N(6)-[(R)-lipoyl]-L-lysyl-[protein] + 2-oxoglutarate + H(+) = N(6)-[(R)-S(8)-succinyldihydrolipoyl]-L-lysyl-[protein] + CO2</text>
        <dbReference type="Rhea" id="RHEA:12188"/>
        <dbReference type="Rhea" id="RHEA-COMP:10474"/>
        <dbReference type="Rhea" id="RHEA-COMP:20092"/>
        <dbReference type="ChEBI" id="CHEBI:15378"/>
        <dbReference type="ChEBI" id="CHEBI:16526"/>
        <dbReference type="ChEBI" id="CHEBI:16810"/>
        <dbReference type="ChEBI" id="CHEBI:83099"/>
        <dbReference type="ChEBI" id="CHEBI:83120"/>
        <dbReference type="EC" id="1.2.4.2"/>
    </reaction>
</comment>
<comment type="cofactor">
    <cofactor evidence="1">
        <name>thiamine diphosphate</name>
        <dbReference type="ChEBI" id="CHEBI:58937"/>
    </cofactor>
</comment>
<comment type="subunit">
    <text evidence="1">Homodimer. Part of the 2-oxoglutarate dehydrogenase (OGDH) complex composed of E1 (2-oxoglutarate dehydrogenase), E2 (dihydrolipoamide succinyltransferase) and E3 (dihydrolipoamide dehydrogenase); the complex contains multiple copies of the three enzymatic components (E1, E2 and E3).</text>
</comment>
<comment type="similarity">
    <text evidence="1">Belongs to the alpha-ketoglutarate dehydrogenase family.</text>
</comment>
<name>ODO1_STAA9</name>